<reference key="1">
    <citation type="journal article" date="2007" name="PLoS Genet.">
        <title>Meningococcal genetic variation mechanisms viewed through comparative analysis of serogroup C strain FAM18.</title>
        <authorList>
            <person name="Bentley S.D."/>
            <person name="Vernikos G.S."/>
            <person name="Snyder L.A.S."/>
            <person name="Churcher C."/>
            <person name="Arrowsmith C."/>
            <person name="Chillingworth T."/>
            <person name="Cronin A."/>
            <person name="Davis P.H."/>
            <person name="Holroyd N.E."/>
            <person name="Jagels K."/>
            <person name="Maddison M."/>
            <person name="Moule S."/>
            <person name="Rabbinowitsch E."/>
            <person name="Sharp S."/>
            <person name="Unwin L."/>
            <person name="Whitehead S."/>
            <person name="Quail M.A."/>
            <person name="Achtman M."/>
            <person name="Barrell B.G."/>
            <person name="Saunders N.J."/>
            <person name="Parkhill J."/>
        </authorList>
    </citation>
    <scope>NUCLEOTIDE SEQUENCE [LARGE SCALE GENOMIC DNA]</scope>
    <source>
        <strain>ATCC 700532 / DSM 15464 / FAM18</strain>
    </source>
</reference>
<name>TYSY_NEIMF</name>
<proteinExistence type="inferred from homology"/>
<evidence type="ECO:0000255" key="1">
    <source>
        <dbReference type="HAMAP-Rule" id="MF_00008"/>
    </source>
</evidence>
<sequence>MKAYLDLMRHVLDNGTDKSDRTGTGTRSVFGYQMRFDLGKGFPLLTTKKLHLRSIIHELLWFLKGDTNIKYLKDNNVSIWDEWADENGDLGPVYGYQWRNWPAPDGRHIDQIANVVEQIKKNPDSRRLIVSAWNPALVDEMALPPCHALFQFYVADGKLSCQLYQRSADIFLGVPFNIASYALLTMMMAQVCGLEAGEFVHTFGDAHLYRNHFEQAALQLEREPRALPVMKINPEVKDLFSFKFEDFELEGYDPHPHIKAAVSV</sequence>
<keyword id="KW-0963">Cytoplasm</keyword>
<keyword id="KW-0489">Methyltransferase</keyword>
<keyword id="KW-0545">Nucleotide biosynthesis</keyword>
<keyword id="KW-0808">Transferase</keyword>
<accession>A1KVB3</accession>
<protein>
    <recommendedName>
        <fullName evidence="1">Thymidylate synthase</fullName>
        <shortName evidence="1">TS</shortName>
        <shortName evidence="1">TSase</shortName>
        <ecNumber evidence="1">2.1.1.45</ecNumber>
    </recommendedName>
</protein>
<organism>
    <name type="scientific">Neisseria meningitidis serogroup C / serotype 2a (strain ATCC 700532 / DSM 15464 / FAM18)</name>
    <dbReference type="NCBI Taxonomy" id="272831"/>
    <lineage>
        <taxon>Bacteria</taxon>
        <taxon>Pseudomonadati</taxon>
        <taxon>Pseudomonadota</taxon>
        <taxon>Betaproteobacteria</taxon>
        <taxon>Neisseriales</taxon>
        <taxon>Neisseriaceae</taxon>
        <taxon>Neisseria</taxon>
    </lineage>
</organism>
<gene>
    <name evidence="1" type="primary">thyA</name>
    <name type="ordered locus">NMC1624</name>
</gene>
<feature type="chain" id="PRO_1000000638" description="Thymidylate synthase">
    <location>
        <begin position="1"/>
        <end position="264"/>
    </location>
</feature>
<feature type="active site" description="Nucleophile" evidence="1">
    <location>
        <position position="146"/>
    </location>
</feature>
<feature type="binding site" description="in other chain" evidence="1">
    <location>
        <position position="21"/>
    </location>
    <ligand>
        <name>dUMP</name>
        <dbReference type="ChEBI" id="CHEBI:246422"/>
        <note>ligand shared between dimeric partners</note>
    </ligand>
</feature>
<feature type="binding site" evidence="1">
    <location>
        <position position="51"/>
    </location>
    <ligand>
        <name>(6R)-5,10-methylene-5,6,7,8-tetrahydrofolate</name>
        <dbReference type="ChEBI" id="CHEBI:15636"/>
    </ligand>
</feature>
<feature type="binding site" evidence="1">
    <location>
        <begin position="126"/>
        <end position="127"/>
    </location>
    <ligand>
        <name>dUMP</name>
        <dbReference type="ChEBI" id="CHEBI:246422"/>
        <note>ligand shared between dimeric partners</note>
    </ligand>
</feature>
<feature type="binding site" description="in other chain" evidence="1">
    <location>
        <begin position="166"/>
        <end position="169"/>
    </location>
    <ligand>
        <name>dUMP</name>
        <dbReference type="ChEBI" id="CHEBI:246422"/>
        <note>ligand shared between dimeric partners</note>
    </ligand>
</feature>
<feature type="binding site" evidence="1">
    <location>
        <position position="169"/>
    </location>
    <ligand>
        <name>(6R)-5,10-methylene-5,6,7,8-tetrahydrofolate</name>
        <dbReference type="ChEBI" id="CHEBI:15636"/>
    </ligand>
</feature>
<feature type="binding site" description="in other chain" evidence="1">
    <location>
        <position position="177"/>
    </location>
    <ligand>
        <name>dUMP</name>
        <dbReference type="ChEBI" id="CHEBI:246422"/>
        <note>ligand shared between dimeric partners</note>
    </ligand>
</feature>
<feature type="binding site" description="in other chain" evidence="1">
    <location>
        <begin position="207"/>
        <end position="209"/>
    </location>
    <ligand>
        <name>dUMP</name>
        <dbReference type="ChEBI" id="CHEBI:246422"/>
        <note>ligand shared between dimeric partners</note>
    </ligand>
</feature>
<feature type="binding site" evidence="1">
    <location>
        <position position="263"/>
    </location>
    <ligand>
        <name>(6R)-5,10-methylene-5,6,7,8-tetrahydrofolate</name>
        <dbReference type="ChEBI" id="CHEBI:15636"/>
    </ligand>
</feature>
<comment type="function">
    <text evidence="1">Catalyzes the reductive methylation of 2'-deoxyuridine-5'-monophosphate (dUMP) to 2'-deoxythymidine-5'-monophosphate (dTMP) while utilizing 5,10-methylenetetrahydrofolate (mTHF) as the methyl donor and reductant in the reaction, yielding dihydrofolate (DHF) as a by-product. This enzymatic reaction provides an intracellular de novo source of dTMP, an essential precursor for DNA biosynthesis.</text>
</comment>
<comment type="catalytic activity">
    <reaction evidence="1">
        <text>dUMP + (6R)-5,10-methylene-5,6,7,8-tetrahydrofolate = 7,8-dihydrofolate + dTMP</text>
        <dbReference type="Rhea" id="RHEA:12104"/>
        <dbReference type="ChEBI" id="CHEBI:15636"/>
        <dbReference type="ChEBI" id="CHEBI:57451"/>
        <dbReference type="ChEBI" id="CHEBI:63528"/>
        <dbReference type="ChEBI" id="CHEBI:246422"/>
        <dbReference type="EC" id="2.1.1.45"/>
    </reaction>
</comment>
<comment type="pathway">
    <text evidence="1">Pyrimidine metabolism; dTTP biosynthesis.</text>
</comment>
<comment type="subunit">
    <text evidence="1">Homodimer.</text>
</comment>
<comment type="subcellular location">
    <subcellularLocation>
        <location evidence="1">Cytoplasm</location>
    </subcellularLocation>
</comment>
<comment type="similarity">
    <text evidence="1">Belongs to the thymidylate synthase family. Bacterial-type ThyA subfamily.</text>
</comment>
<dbReference type="EC" id="2.1.1.45" evidence="1"/>
<dbReference type="EMBL" id="AM421808">
    <property type="protein sequence ID" value="CAM10814.1"/>
    <property type="molecule type" value="Genomic_DNA"/>
</dbReference>
<dbReference type="RefSeq" id="WP_002220433.1">
    <property type="nucleotide sequence ID" value="NC_008767.1"/>
</dbReference>
<dbReference type="SMR" id="A1KVB3"/>
<dbReference type="KEGG" id="nmc:NMC1624"/>
<dbReference type="HOGENOM" id="CLU_021669_0_0_4"/>
<dbReference type="UniPathway" id="UPA00575"/>
<dbReference type="Proteomes" id="UP000002286">
    <property type="component" value="Chromosome"/>
</dbReference>
<dbReference type="GO" id="GO:0005829">
    <property type="term" value="C:cytosol"/>
    <property type="evidence" value="ECO:0007669"/>
    <property type="project" value="TreeGrafter"/>
</dbReference>
<dbReference type="GO" id="GO:0004799">
    <property type="term" value="F:thymidylate synthase activity"/>
    <property type="evidence" value="ECO:0007669"/>
    <property type="project" value="UniProtKB-UniRule"/>
</dbReference>
<dbReference type="GO" id="GO:0006231">
    <property type="term" value="P:dTMP biosynthetic process"/>
    <property type="evidence" value="ECO:0007669"/>
    <property type="project" value="UniProtKB-UniRule"/>
</dbReference>
<dbReference type="GO" id="GO:0006235">
    <property type="term" value="P:dTTP biosynthetic process"/>
    <property type="evidence" value="ECO:0007669"/>
    <property type="project" value="UniProtKB-UniRule"/>
</dbReference>
<dbReference type="GO" id="GO:0032259">
    <property type="term" value="P:methylation"/>
    <property type="evidence" value="ECO:0007669"/>
    <property type="project" value="UniProtKB-KW"/>
</dbReference>
<dbReference type="CDD" id="cd00351">
    <property type="entry name" value="TS_Pyrimidine_HMase"/>
    <property type="match status" value="1"/>
</dbReference>
<dbReference type="FunFam" id="3.30.572.10:FF:000001">
    <property type="entry name" value="Thymidylate synthase"/>
    <property type="match status" value="1"/>
</dbReference>
<dbReference type="Gene3D" id="3.30.572.10">
    <property type="entry name" value="Thymidylate synthase/dCMP hydroxymethylase domain"/>
    <property type="match status" value="1"/>
</dbReference>
<dbReference type="HAMAP" id="MF_00008">
    <property type="entry name" value="Thymidy_synth_bact"/>
    <property type="match status" value="1"/>
</dbReference>
<dbReference type="InterPro" id="IPR045097">
    <property type="entry name" value="Thymidate_synth/dCMP_Mease"/>
</dbReference>
<dbReference type="InterPro" id="IPR023451">
    <property type="entry name" value="Thymidate_synth/dCMP_Mease_dom"/>
</dbReference>
<dbReference type="InterPro" id="IPR036926">
    <property type="entry name" value="Thymidate_synth/dCMP_Mease_sf"/>
</dbReference>
<dbReference type="InterPro" id="IPR000398">
    <property type="entry name" value="Thymidylate_synthase"/>
</dbReference>
<dbReference type="InterPro" id="IPR020940">
    <property type="entry name" value="Thymidylate_synthase_AS"/>
</dbReference>
<dbReference type="NCBIfam" id="NF002497">
    <property type="entry name" value="PRK01827.1-3"/>
    <property type="match status" value="1"/>
</dbReference>
<dbReference type="NCBIfam" id="NF002499">
    <property type="entry name" value="PRK01827.1-5"/>
    <property type="match status" value="1"/>
</dbReference>
<dbReference type="NCBIfam" id="TIGR03284">
    <property type="entry name" value="thym_sym"/>
    <property type="match status" value="2"/>
</dbReference>
<dbReference type="PANTHER" id="PTHR11548:SF9">
    <property type="entry name" value="THYMIDYLATE SYNTHASE"/>
    <property type="match status" value="1"/>
</dbReference>
<dbReference type="PANTHER" id="PTHR11548">
    <property type="entry name" value="THYMIDYLATE SYNTHASE 1"/>
    <property type="match status" value="1"/>
</dbReference>
<dbReference type="Pfam" id="PF00303">
    <property type="entry name" value="Thymidylat_synt"/>
    <property type="match status" value="1"/>
</dbReference>
<dbReference type="PRINTS" id="PR00108">
    <property type="entry name" value="THYMDSNTHASE"/>
</dbReference>
<dbReference type="SUPFAM" id="SSF55831">
    <property type="entry name" value="Thymidylate synthase/dCMP hydroxymethylase"/>
    <property type="match status" value="1"/>
</dbReference>
<dbReference type="PROSITE" id="PS00091">
    <property type="entry name" value="THYMIDYLATE_SYNTHASE"/>
    <property type="match status" value="1"/>
</dbReference>